<dbReference type="EMBL" id="L42023">
    <property type="protein sequence ID" value="AAC22605.1"/>
    <property type="molecule type" value="Genomic_DNA"/>
</dbReference>
<dbReference type="PIR" id="A64017">
    <property type="entry name" value="A64017"/>
</dbReference>
<dbReference type="RefSeq" id="NP_439101.1">
    <property type="nucleotide sequence ID" value="NC_000907.1"/>
</dbReference>
<dbReference type="SMR" id="P44082"/>
<dbReference type="STRING" id="71421.HI_0941"/>
<dbReference type="EnsemblBacteria" id="AAC22605">
    <property type="protein sequence ID" value="AAC22605"/>
    <property type="gene ID" value="HI_0941"/>
</dbReference>
<dbReference type="KEGG" id="hin:HI_0941"/>
<dbReference type="PATRIC" id="fig|71421.8.peg.982"/>
<dbReference type="eggNOG" id="ENOG5031K0S">
    <property type="taxonomic scope" value="Bacteria"/>
</dbReference>
<dbReference type="HOGENOM" id="CLU_182745_0_0_6"/>
<dbReference type="OrthoDB" id="5690717at2"/>
<dbReference type="BioCyc" id="HINF71421:G1GJ1-981-MONOMER"/>
<dbReference type="Proteomes" id="UP000000579">
    <property type="component" value="Chromosome"/>
</dbReference>
<dbReference type="InterPro" id="IPR020511">
    <property type="entry name" value="Uncharacterised_HI0941"/>
</dbReference>
<dbReference type="Pfam" id="PF17344">
    <property type="entry name" value="DUF5374"/>
    <property type="match status" value="1"/>
</dbReference>
<feature type="signal peptide" evidence="1">
    <location>
        <begin position="1"/>
        <end position="24"/>
    </location>
</feature>
<feature type="chain" id="PRO_0000013961" description="Uncharacterized protein HI_0941">
    <location>
        <begin position="25"/>
        <end position="101"/>
    </location>
</feature>
<evidence type="ECO:0000255" key="1"/>
<reference key="1">
    <citation type="journal article" date="1995" name="Science">
        <title>Whole-genome random sequencing and assembly of Haemophilus influenzae Rd.</title>
        <authorList>
            <person name="Fleischmann R.D."/>
            <person name="Adams M.D."/>
            <person name="White O."/>
            <person name="Clayton R.A."/>
            <person name="Kirkness E.F."/>
            <person name="Kerlavage A.R."/>
            <person name="Bult C.J."/>
            <person name="Tomb J.-F."/>
            <person name="Dougherty B.A."/>
            <person name="Merrick J.M."/>
            <person name="McKenney K."/>
            <person name="Sutton G.G."/>
            <person name="FitzHugh W."/>
            <person name="Fields C.A."/>
            <person name="Gocayne J.D."/>
            <person name="Scott J.D."/>
            <person name="Shirley R."/>
            <person name="Liu L.-I."/>
            <person name="Glodek A."/>
            <person name="Kelley J.M."/>
            <person name="Weidman J.F."/>
            <person name="Phillips C.A."/>
            <person name="Spriggs T."/>
            <person name="Hedblom E."/>
            <person name="Cotton M.D."/>
            <person name="Utterback T.R."/>
            <person name="Hanna M.C."/>
            <person name="Nguyen D.T."/>
            <person name="Saudek D.M."/>
            <person name="Brandon R.C."/>
            <person name="Fine L.D."/>
            <person name="Fritchman J.L."/>
            <person name="Fuhrmann J.L."/>
            <person name="Geoghagen N.S.M."/>
            <person name="Gnehm C.L."/>
            <person name="McDonald L.A."/>
            <person name="Small K.V."/>
            <person name="Fraser C.M."/>
            <person name="Smith H.O."/>
            <person name="Venter J.C."/>
        </authorList>
    </citation>
    <scope>NUCLEOTIDE SEQUENCE [LARGE SCALE GENOMIC DNA]</scope>
    <source>
        <strain>ATCC 51907 / DSM 11121 / KW20 / Rd</strain>
    </source>
</reference>
<protein>
    <recommendedName>
        <fullName>Uncharacterized protein HI_0941</fullName>
    </recommendedName>
</protein>
<proteinExistence type="inferred from homology"/>
<accession>P44082</accession>
<organism>
    <name type="scientific">Haemophilus influenzae (strain ATCC 51907 / DSM 11121 / KW20 / Rd)</name>
    <dbReference type="NCBI Taxonomy" id="71421"/>
    <lineage>
        <taxon>Bacteria</taxon>
        <taxon>Pseudomonadati</taxon>
        <taxon>Pseudomonadota</taxon>
        <taxon>Gammaproteobacteria</taxon>
        <taxon>Pasteurellales</taxon>
        <taxon>Pasteurellaceae</taxon>
        <taxon>Haemophilus</taxon>
    </lineage>
</organism>
<gene>
    <name type="ordered locus">HI_0941</name>
</gene>
<sequence length="101" mass="11830">MILMFRMNKGMSFITLLFSLALFSVLFLVFNQWTASQRKSTVKTYQDFQAIQVAENQAQRQFLGLACEQLIQQNGLTFRIQCENERIIVRYPTSEILIKTQ</sequence>
<keyword id="KW-1185">Reference proteome</keyword>
<keyword id="KW-0732">Signal</keyword>
<name>Y941_HAEIN</name>